<keyword id="KW-0067">ATP-binding</keyword>
<keyword id="KW-0997">Cell inner membrane</keyword>
<keyword id="KW-1003">Cell membrane</keyword>
<keyword id="KW-0472">Membrane</keyword>
<keyword id="KW-0547">Nucleotide-binding</keyword>
<keyword id="KW-1185">Reference proteome</keyword>
<keyword id="KW-0677">Repeat</keyword>
<keyword id="KW-0762">Sugar transport</keyword>
<keyword id="KW-1278">Translocase</keyword>
<keyword id="KW-0813">Transport</keyword>
<dbReference type="EC" id="7.5.2.12" evidence="1"/>
<dbReference type="EMBL" id="CP000034">
    <property type="protein sequence ID" value="ABB61278.1"/>
    <property type="molecule type" value="Genomic_DNA"/>
</dbReference>
<dbReference type="RefSeq" id="WP_001187828.1">
    <property type="nucleotide sequence ID" value="NC_007606.1"/>
</dbReference>
<dbReference type="RefSeq" id="YP_402769.1">
    <property type="nucleotide sequence ID" value="NC_007606.1"/>
</dbReference>
<dbReference type="SMR" id="Q32HC7"/>
<dbReference type="STRING" id="300267.SDY_1121"/>
<dbReference type="EnsemblBacteria" id="ABB61278">
    <property type="protein sequence ID" value="ABB61278"/>
    <property type="gene ID" value="SDY_1121"/>
</dbReference>
<dbReference type="KEGG" id="sdy:SDY_1121"/>
<dbReference type="PATRIC" id="fig|300267.13.peg.1321"/>
<dbReference type="HOGENOM" id="CLU_000604_92_3_6"/>
<dbReference type="Proteomes" id="UP000002716">
    <property type="component" value="Chromosome"/>
</dbReference>
<dbReference type="GO" id="GO:0005886">
    <property type="term" value="C:plasma membrane"/>
    <property type="evidence" value="ECO:0007669"/>
    <property type="project" value="UniProtKB-SubCell"/>
</dbReference>
<dbReference type="GO" id="GO:0015612">
    <property type="term" value="F:ABC-type L-arabinose transporter activity"/>
    <property type="evidence" value="ECO:0007669"/>
    <property type="project" value="UniProtKB-EC"/>
</dbReference>
<dbReference type="GO" id="GO:0005524">
    <property type="term" value="F:ATP binding"/>
    <property type="evidence" value="ECO:0007669"/>
    <property type="project" value="UniProtKB-KW"/>
</dbReference>
<dbReference type="GO" id="GO:0016887">
    <property type="term" value="F:ATP hydrolysis activity"/>
    <property type="evidence" value="ECO:0007669"/>
    <property type="project" value="InterPro"/>
</dbReference>
<dbReference type="CDD" id="cd03216">
    <property type="entry name" value="ABC_Carb_Monos_I"/>
    <property type="match status" value="1"/>
</dbReference>
<dbReference type="CDD" id="cd03215">
    <property type="entry name" value="ABC_Carb_Monos_II"/>
    <property type="match status" value="1"/>
</dbReference>
<dbReference type="FunFam" id="3.40.50.300:FF:000126">
    <property type="entry name" value="Galactose/methyl galactoside import ATP-binding protein MglA"/>
    <property type="match status" value="1"/>
</dbReference>
<dbReference type="FunFam" id="3.40.50.300:FF:000127">
    <property type="entry name" value="Ribose import ATP-binding protein RbsA"/>
    <property type="match status" value="1"/>
</dbReference>
<dbReference type="Gene3D" id="3.40.50.300">
    <property type="entry name" value="P-loop containing nucleotide triphosphate hydrolases"/>
    <property type="match status" value="2"/>
</dbReference>
<dbReference type="InterPro" id="IPR003593">
    <property type="entry name" value="AAA+_ATPase"/>
</dbReference>
<dbReference type="InterPro" id="IPR050107">
    <property type="entry name" value="ABC_carbohydrate_import_ATPase"/>
</dbReference>
<dbReference type="InterPro" id="IPR003439">
    <property type="entry name" value="ABC_transporter-like_ATP-bd"/>
</dbReference>
<dbReference type="InterPro" id="IPR017871">
    <property type="entry name" value="ABC_transporter-like_CS"/>
</dbReference>
<dbReference type="InterPro" id="IPR027417">
    <property type="entry name" value="P-loop_NTPase"/>
</dbReference>
<dbReference type="NCBIfam" id="NF008442">
    <property type="entry name" value="PRK11288.1"/>
    <property type="match status" value="1"/>
</dbReference>
<dbReference type="PANTHER" id="PTHR43790:SF6">
    <property type="entry name" value="ARABINOSE IMPORT ATP-BINDING PROTEIN ARAG"/>
    <property type="match status" value="1"/>
</dbReference>
<dbReference type="PANTHER" id="PTHR43790">
    <property type="entry name" value="CARBOHYDRATE TRANSPORT ATP-BINDING PROTEIN MG119-RELATED"/>
    <property type="match status" value="1"/>
</dbReference>
<dbReference type="Pfam" id="PF00005">
    <property type="entry name" value="ABC_tran"/>
    <property type="match status" value="2"/>
</dbReference>
<dbReference type="SMART" id="SM00382">
    <property type="entry name" value="AAA"/>
    <property type="match status" value="2"/>
</dbReference>
<dbReference type="SUPFAM" id="SSF52540">
    <property type="entry name" value="P-loop containing nucleoside triphosphate hydrolases"/>
    <property type="match status" value="2"/>
</dbReference>
<dbReference type="PROSITE" id="PS00211">
    <property type="entry name" value="ABC_TRANSPORTER_1"/>
    <property type="match status" value="1"/>
</dbReference>
<dbReference type="PROSITE" id="PS50893">
    <property type="entry name" value="ABC_TRANSPORTER_2"/>
    <property type="match status" value="2"/>
</dbReference>
<dbReference type="PROSITE" id="PS51268">
    <property type="entry name" value="ARAG"/>
    <property type="match status" value="1"/>
</dbReference>
<sequence>MQQSTPYLSFRGIGKTFPGVKALTDISFDCYAGQVHALMGENGAGKSTLLKILSGNYAPTTGSVVINGQEMSFSDTTAALNAGVAIIYQELHLVPEMTVAENIYLGQLPHKGGIVNRSLLNYEAGLQLKHLGMDIDPDTPLKYLSIGQWQMVEIAKALARNAKIIAFDEPTSSLSAREIDNLFRVIRELRKEGRVILYVSHRMEEIFALSDAITVFKDGRYVRTFTDMQQVDHDALVQAMVGRDIGDIYGWQPRSYGEERLRLDAVKAPGVRTPISLAVRSGEIVGLFGLVGAGRSELMKGMFGGTQITAGQVYIDQQPIDIRKPSHAIAAGMMLCPEDRKAEGIIPVHSVRDNINISARRKHVLGGCVINNGWEENNADHHIRSLNIKTPGAEQLIMNLSGGNQQKAILGRWLSEEMKVILLDEPTRGIDVGAKHEIYNVIYALAAQGVAVLFASSDLPEVLGVADRIVVMREGEIAGELLHEQADERQALSLAMPKVSQAVA</sequence>
<accession>Q32HC7</accession>
<reference key="1">
    <citation type="journal article" date="2005" name="Nucleic Acids Res.">
        <title>Genome dynamics and diversity of Shigella species, the etiologic agents of bacillary dysentery.</title>
        <authorList>
            <person name="Yang F."/>
            <person name="Yang J."/>
            <person name="Zhang X."/>
            <person name="Chen L."/>
            <person name="Jiang Y."/>
            <person name="Yan Y."/>
            <person name="Tang X."/>
            <person name="Wang J."/>
            <person name="Xiong Z."/>
            <person name="Dong J."/>
            <person name="Xue Y."/>
            <person name="Zhu Y."/>
            <person name="Xu X."/>
            <person name="Sun L."/>
            <person name="Chen S."/>
            <person name="Nie H."/>
            <person name="Peng J."/>
            <person name="Xu J."/>
            <person name="Wang Y."/>
            <person name="Yuan Z."/>
            <person name="Wen Y."/>
            <person name="Yao Z."/>
            <person name="Shen Y."/>
            <person name="Qiang B."/>
            <person name="Hou Y."/>
            <person name="Yu J."/>
            <person name="Jin Q."/>
        </authorList>
    </citation>
    <scope>NUCLEOTIDE SEQUENCE [LARGE SCALE GENOMIC DNA]</scope>
    <source>
        <strain>Sd197</strain>
    </source>
</reference>
<gene>
    <name evidence="1" type="primary">araG</name>
    <name type="ordered locus">SDY_1121</name>
</gene>
<protein>
    <recommendedName>
        <fullName evidence="1">Arabinose import ATP-binding protein AraG</fullName>
        <ecNumber evidence="1">7.5.2.12</ecNumber>
    </recommendedName>
</protein>
<feature type="chain" id="PRO_0000270479" description="Arabinose import ATP-binding protein AraG">
    <location>
        <begin position="1"/>
        <end position="504"/>
    </location>
</feature>
<feature type="domain" description="ABC transporter 1" evidence="1">
    <location>
        <begin position="8"/>
        <end position="243"/>
    </location>
</feature>
<feature type="domain" description="ABC transporter 2" evidence="1">
    <location>
        <begin position="256"/>
        <end position="499"/>
    </location>
</feature>
<feature type="binding site" evidence="1">
    <location>
        <begin position="40"/>
        <end position="47"/>
    </location>
    <ligand>
        <name>ATP</name>
        <dbReference type="ChEBI" id="CHEBI:30616"/>
    </ligand>
</feature>
<name>ARAG_SHIDS</name>
<comment type="function">
    <text evidence="1">Part of the ABC transporter complex AraFGH involved in arabinose import. Responsible for energy coupling to the transport system.</text>
</comment>
<comment type="catalytic activity">
    <reaction evidence="1">
        <text>L-arabinose(out) + ATP + H2O = L-arabinose(in) + ADP + phosphate + H(+)</text>
        <dbReference type="Rhea" id="RHEA:30007"/>
        <dbReference type="ChEBI" id="CHEBI:15377"/>
        <dbReference type="ChEBI" id="CHEBI:15378"/>
        <dbReference type="ChEBI" id="CHEBI:17535"/>
        <dbReference type="ChEBI" id="CHEBI:30616"/>
        <dbReference type="ChEBI" id="CHEBI:43474"/>
        <dbReference type="ChEBI" id="CHEBI:456216"/>
        <dbReference type="EC" id="7.5.2.12"/>
    </reaction>
</comment>
<comment type="subunit">
    <text evidence="1">The complex is composed of two ATP-binding proteins (AraG), two transmembrane proteins (AraH) and a solute-binding protein (AraF).</text>
</comment>
<comment type="subcellular location">
    <subcellularLocation>
        <location evidence="1">Cell inner membrane</location>
        <topology evidence="1">Peripheral membrane protein</topology>
    </subcellularLocation>
</comment>
<comment type="similarity">
    <text evidence="1">Belongs to the ABC transporter superfamily. Arabinose importer (TC 3.A.1.2.2) family.</text>
</comment>
<evidence type="ECO:0000255" key="1">
    <source>
        <dbReference type="HAMAP-Rule" id="MF_01721"/>
    </source>
</evidence>
<organism>
    <name type="scientific">Shigella dysenteriae serotype 1 (strain Sd197)</name>
    <dbReference type="NCBI Taxonomy" id="300267"/>
    <lineage>
        <taxon>Bacteria</taxon>
        <taxon>Pseudomonadati</taxon>
        <taxon>Pseudomonadota</taxon>
        <taxon>Gammaproteobacteria</taxon>
        <taxon>Enterobacterales</taxon>
        <taxon>Enterobacteriaceae</taxon>
        <taxon>Shigella</taxon>
    </lineage>
</organism>
<proteinExistence type="inferred from homology"/>